<gene>
    <name evidence="1" type="primary">ruvA</name>
    <name type="ordered locus">Ajs_3700</name>
</gene>
<comment type="function">
    <text evidence="1">The RuvA-RuvB-RuvC complex processes Holliday junction (HJ) DNA during genetic recombination and DNA repair, while the RuvA-RuvB complex plays an important role in the rescue of blocked DNA replication forks via replication fork reversal (RFR). RuvA specifically binds to HJ cruciform DNA, conferring on it an open structure. The RuvB hexamer acts as an ATP-dependent pump, pulling dsDNA into and through the RuvAB complex. HJ branch migration allows RuvC to scan DNA until it finds its consensus sequence, where it cleaves and resolves the cruciform DNA.</text>
</comment>
<comment type="subunit">
    <text evidence="1">Homotetramer. Forms an RuvA(8)-RuvB(12)-Holliday junction (HJ) complex. HJ DNA is sandwiched between 2 RuvA tetramers; dsDNA enters through RuvA and exits via RuvB. An RuvB hexamer assembles on each DNA strand where it exits the tetramer. Each RuvB hexamer is contacted by two RuvA subunits (via domain III) on 2 adjacent RuvB subunits; this complex drives branch migration. In the full resolvosome a probable DNA-RuvA(4)-RuvB(12)-RuvC(2) complex forms which resolves the HJ.</text>
</comment>
<comment type="subcellular location">
    <subcellularLocation>
        <location evidence="1">Cytoplasm</location>
    </subcellularLocation>
</comment>
<comment type="domain">
    <text evidence="1">Has three domains with a flexible linker between the domains II and III and assumes an 'L' shape. Domain III is highly mobile and contacts RuvB.</text>
</comment>
<comment type="similarity">
    <text evidence="1">Belongs to the RuvA family.</text>
</comment>
<dbReference type="EMBL" id="CP000539">
    <property type="protein sequence ID" value="ABM43811.1"/>
    <property type="molecule type" value="Genomic_DNA"/>
</dbReference>
<dbReference type="SMR" id="A1WC36"/>
<dbReference type="STRING" id="232721.Ajs_3700"/>
<dbReference type="KEGG" id="ajs:Ajs_3700"/>
<dbReference type="eggNOG" id="COG0632">
    <property type="taxonomic scope" value="Bacteria"/>
</dbReference>
<dbReference type="HOGENOM" id="CLU_087936_0_0_4"/>
<dbReference type="Proteomes" id="UP000000645">
    <property type="component" value="Chromosome"/>
</dbReference>
<dbReference type="GO" id="GO:0005737">
    <property type="term" value="C:cytoplasm"/>
    <property type="evidence" value="ECO:0007669"/>
    <property type="project" value="UniProtKB-SubCell"/>
</dbReference>
<dbReference type="GO" id="GO:0009379">
    <property type="term" value="C:Holliday junction helicase complex"/>
    <property type="evidence" value="ECO:0007669"/>
    <property type="project" value="InterPro"/>
</dbReference>
<dbReference type="GO" id="GO:0048476">
    <property type="term" value="C:Holliday junction resolvase complex"/>
    <property type="evidence" value="ECO:0007669"/>
    <property type="project" value="UniProtKB-UniRule"/>
</dbReference>
<dbReference type="GO" id="GO:0005524">
    <property type="term" value="F:ATP binding"/>
    <property type="evidence" value="ECO:0007669"/>
    <property type="project" value="InterPro"/>
</dbReference>
<dbReference type="GO" id="GO:0000400">
    <property type="term" value="F:four-way junction DNA binding"/>
    <property type="evidence" value="ECO:0007669"/>
    <property type="project" value="UniProtKB-UniRule"/>
</dbReference>
<dbReference type="GO" id="GO:0009378">
    <property type="term" value="F:four-way junction helicase activity"/>
    <property type="evidence" value="ECO:0007669"/>
    <property type="project" value="InterPro"/>
</dbReference>
<dbReference type="GO" id="GO:0006310">
    <property type="term" value="P:DNA recombination"/>
    <property type="evidence" value="ECO:0007669"/>
    <property type="project" value="UniProtKB-UniRule"/>
</dbReference>
<dbReference type="GO" id="GO:0006281">
    <property type="term" value="P:DNA repair"/>
    <property type="evidence" value="ECO:0007669"/>
    <property type="project" value="UniProtKB-UniRule"/>
</dbReference>
<dbReference type="CDD" id="cd14332">
    <property type="entry name" value="UBA_RuvA_C"/>
    <property type="match status" value="1"/>
</dbReference>
<dbReference type="Gene3D" id="1.10.150.20">
    <property type="entry name" value="5' to 3' exonuclease, C-terminal subdomain"/>
    <property type="match status" value="1"/>
</dbReference>
<dbReference type="Gene3D" id="1.10.8.10">
    <property type="entry name" value="DNA helicase RuvA subunit, C-terminal domain"/>
    <property type="match status" value="1"/>
</dbReference>
<dbReference type="Gene3D" id="2.40.50.140">
    <property type="entry name" value="Nucleic acid-binding proteins"/>
    <property type="match status" value="1"/>
</dbReference>
<dbReference type="HAMAP" id="MF_00031">
    <property type="entry name" value="DNA_HJ_migration_RuvA"/>
    <property type="match status" value="1"/>
</dbReference>
<dbReference type="InterPro" id="IPR013849">
    <property type="entry name" value="DNA_helicase_Holl-junc_RuvA_I"/>
</dbReference>
<dbReference type="InterPro" id="IPR003583">
    <property type="entry name" value="Hlx-hairpin-Hlx_DNA-bd_motif"/>
</dbReference>
<dbReference type="InterPro" id="IPR012340">
    <property type="entry name" value="NA-bd_OB-fold"/>
</dbReference>
<dbReference type="InterPro" id="IPR000085">
    <property type="entry name" value="RuvA"/>
</dbReference>
<dbReference type="InterPro" id="IPR010994">
    <property type="entry name" value="RuvA_2-like"/>
</dbReference>
<dbReference type="InterPro" id="IPR011114">
    <property type="entry name" value="RuvA_C"/>
</dbReference>
<dbReference type="InterPro" id="IPR036267">
    <property type="entry name" value="RuvA_C_sf"/>
</dbReference>
<dbReference type="NCBIfam" id="TIGR00084">
    <property type="entry name" value="ruvA"/>
    <property type="match status" value="1"/>
</dbReference>
<dbReference type="Pfam" id="PF14520">
    <property type="entry name" value="HHH_5"/>
    <property type="match status" value="1"/>
</dbReference>
<dbReference type="Pfam" id="PF07499">
    <property type="entry name" value="RuvA_C"/>
    <property type="match status" value="1"/>
</dbReference>
<dbReference type="Pfam" id="PF01330">
    <property type="entry name" value="RuvA_N"/>
    <property type="match status" value="1"/>
</dbReference>
<dbReference type="SMART" id="SM00278">
    <property type="entry name" value="HhH1"/>
    <property type="match status" value="2"/>
</dbReference>
<dbReference type="SUPFAM" id="SSF46929">
    <property type="entry name" value="DNA helicase RuvA subunit, C-terminal domain"/>
    <property type="match status" value="1"/>
</dbReference>
<dbReference type="SUPFAM" id="SSF50249">
    <property type="entry name" value="Nucleic acid-binding proteins"/>
    <property type="match status" value="1"/>
</dbReference>
<dbReference type="SUPFAM" id="SSF47781">
    <property type="entry name" value="RuvA domain 2-like"/>
    <property type="match status" value="1"/>
</dbReference>
<evidence type="ECO:0000255" key="1">
    <source>
        <dbReference type="HAMAP-Rule" id="MF_00031"/>
    </source>
</evidence>
<sequence length="190" mass="20020">MIGKLTGTLLEKNPPEVLVDCHGVGYEVQVSMSTFYNLPAVGERVSLLTQFIVREDAQLLYGFGTAQERQAFRELIKISGVGPRTALSILSGMGVADLAQAVSLQEAGRLVKVPGIGKKTAERLLLELKGKLGADVGVRAHAANDNQADILQALLALGYNDKEAAAALKALPADVGVSEGIKLALKSLSK</sequence>
<accession>A1WC36</accession>
<keyword id="KW-0963">Cytoplasm</keyword>
<keyword id="KW-0227">DNA damage</keyword>
<keyword id="KW-0233">DNA recombination</keyword>
<keyword id="KW-0234">DNA repair</keyword>
<keyword id="KW-0238">DNA-binding</keyword>
<proteinExistence type="inferred from homology"/>
<reference key="1">
    <citation type="submission" date="2006-12" db="EMBL/GenBank/DDBJ databases">
        <title>Complete sequence of chromosome 1 of Acidovorax sp. JS42.</title>
        <authorList>
            <person name="Copeland A."/>
            <person name="Lucas S."/>
            <person name="Lapidus A."/>
            <person name="Barry K."/>
            <person name="Detter J.C."/>
            <person name="Glavina del Rio T."/>
            <person name="Dalin E."/>
            <person name="Tice H."/>
            <person name="Pitluck S."/>
            <person name="Chertkov O."/>
            <person name="Brettin T."/>
            <person name="Bruce D."/>
            <person name="Han C."/>
            <person name="Tapia R."/>
            <person name="Gilna P."/>
            <person name="Schmutz J."/>
            <person name="Larimer F."/>
            <person name="Land M."/>
            <person name="Hauser L."/>
            <person name="Kyrpides N."/>
            <person name="Kim E."/>
            <person name="Stahl D."/>
            <person name="Richardson P."/>
        </authorList>
    </citation>
    <scope>NUCLEOTIDE SEQUENCE [LARGE SCALE GENOMIC DNA]</scope>
    <source>
        <strain>JS42</strain>
    </source>
</reference>
<organism>
    <name type="scientific">Acidovorax sp. (strain JS42)</name>
    <dbReference type="NCBI Taxonomy" id="232721"/>
    <lineage>
        <taxon>Bacteria</taxon>
        <taxon>Pseudomonadati</taxon>
        <taxon>Pseudomonadota</taxon>
        <taxon>Betaproteobacteria</taxon>
        <taxon>Burkholderiales</taxon>
        <taxon>Comamonadaceae</taxon>
        <taxon>Acidovorax</taxon>
    </lineage>
</organism>
<name>RUVA_ACISJ</name>
<feature type="chain" id="PRO_1000002385" description="Holliday junction branch migration complex subunit RuvA">
    <location>
        <begin position="1"/>
        <end position="190"/>
    </location>
</feature>
<feature type="region of interest" description="Domain I" evidence="1">
    <location>
        <begin position="1"/>
        <end position="64"/>
    </location>
</feature>
<feature type="region of interest" description="Domain II" evidence="1">
    <location>
        <begin position="65"/>
        <end position="137"/>
    </location>
</feature>
<feature type="region of interest" description="Flexible linker" evidence="1">
    <location>
        <begin position="137"/>
        <end position="141"/>
    </location>
</feature>
<feature type="region of interest" description="Domain III" evidence="1">
    <location>
        <begin position="142"/>
        <end position="190"/>
    </location>
</feature>
<protein>
    <recommendedName>
        <fullName evidence="1">Holliday junction branch migration complex subunit RuvA</fullName>
    </recommendedName>
</protein>